<protein>
    <recommendedName>
        <fullName evidence="1">6,7-dimethyl-8-ribityllumazine synthase</fullName>
        <shortName evidence="1">DMRL synthase</shortName>
        <shortName evidence="1">LS</shortName>
        <shortName evidence="1">Lumazine synthase</shortName>
        <ecNumber evidence="1">2.5.1.78</ecNumber>
    </recommendedName>
</protein>
<accession>A0Q3H6</accession>
<keyword id="KW-1185">Reference proteome</keyword>
<keyword id="KW-0686">Riboflavin biosynthesis</keyword>
<keyword id="KW-0808">Transferase</keyword>
<dbReference type="EC" id="2.5.1.78" evidence="1"/>
<dbReference type="EMBL" id="CP000382">
    <property type="protein sequence ID" value="ABK61004.1"/>
    <property type="molecule type" value="Genomic_DNA"/>
</dbReference>
<dbReference type="SMR" id="A0Q3H6"/>
<dbReference type="STRING" id="386415.NT01CX_0712"/>
<dbReference type="KEGG" id="cno:NT01CX_0712"/>
<dbReference type="eggNOG" id="COG0054">
    <property type="taxonomic scope" value="Bacteria"/>
</dbReference>
<dbReference type="HOGENOM" id="CLU_089358_1_1_9"/>
<dbReference type="UniPathway" id="UPA00275">
    <property type="reaction ID" value="UER00404"/>
</dbReference>
<dbReference type="Proteomes" id="UP000008220">
    <property type="component" value="Chromosome"/>
</dbReference>
<dbReference type="GO" id="GO:0005829">
    <property type="term" value="C:cytosol"/>
    <property type="evidence" value="ECO:0007669"/>
    <property type="project" value="TreeGrafter"/>
</dbReference>
<dbReference type="GO" id="GO:0009349">
    <property type="term" value="C:riboflavin synthase complex"/>
    <property type="evidence" value="ECO:0007669"/>
    <property type="project" value="InterPro"/>
</dbReference>
<dbReference type="GO" id="GO:0000906">
    <property type="term" value="F:6,7-dimethyl-8-ribityllumazine synthase activity"/>
    <property type="evidence" value="ECO:0007669"/>
    <property type="project" value="UniProtKB-UniRule"/>
</dbReference>
<dbReference type="GO" id="GO:0009231">
    <property type="term" value="P:riboflavin biosynthetic process"/>
    <property type="evidence" value="ECO:0007669"/>
    <property type="project" value="UniProtKB-UniRule"/>
</dbReference>
<dbReference type="CDD" id="cd09209">
    <property type="entry name" value="Lumazine_synthase-I"/>
    <property type="match status" value="1"/>
</dbReference>
<dbReference type="FunFam" id="3.40.50.960:FF:000001">
    <property type="entry name" value="6,7-dimethyl-8-ribityllumazine synthase"/>
    <property type="match status" value="1"/>
</dbReference>
<dbReference type="Gene3D" id="3.40.50.960">
    <property type="entry name" value="Lumazine/riboflavin synthase"/>
    <property type="match status" value="1"/>
</dbReference>
<dbReference type="HAMAP" id="MF_00178">
    <property type="entry name" value="Lumazine_synth"/>
    <property type="match status" value="1"/>
</dbReference>
<dbReference type="InterPro" id="IPR034964">
    <property type="entry name" value="LS"/>
</dbReference>
<dbReference type="InterPro" id="IPR002180">
    <property type="entry name" value="LS/RS"/>
</dbReference>
<dbReference type="InterPro" id="IPR036467">
    <property type="entry name" value="LS/RS_sf"/>
</dbReference>
<dbReference type="NCBIfam" id="TIGR00114">
    <property type="entry name" value="lumazine-synth"/>
    <property type="match status" value="1"/>
</dbReference>
<dbReference type="NCBIfam" id="NF000812">
    <property type="entry name" value="PRK00061.1-4"/>
    <property type="match status" value="1"/>
</dbReference>
<dbReference type="PANTHER" id="PTHR21058:SF0">
    <property type="entry name" value="6,7-DIMETHYL-8-RIBITYLLUMAZINE SYNTHASE"/>
    <property type="match status" value="1"/>
</dbReference>
<dbReference type="PANTHER" id="PTHR21058">
    <property type="entry name" value="6,7-DIMETHYL-8-RIBITYLLUMAZINE SYNTHASE DMRL SYNTHASE LUMAZINE SYNTHASE"/>
    <property type="match status" value="1"/>
</dbReference>
<dbReference type="Pfam" id="PF00885">
    <property type="entry name" value="DMRL_synthase"/>
    <property type="match status" value="1"/>
</dbReference>
<dbReference type="SUPFAM" id="SSF52121">
    <property type="entry name" value="Lumazine synthase"/>
    <property type="match status" value="1"/>
</dbReference>
<proteinExistence type="inferred from homology"/>
<evidence type="ECO:0000255" key="1">
    <source>
        <dbReference type="HAMAP-Rule" id="MF_00178"/>
    </source>
</evidence>
<comment type="function">
    <text evidence="1">Catalyzes the formation of 6,7-dimethyl-8-ribityllumazine by condensation of 5-amino-6-(D-ribitylamino)uracil with 3,4-dihydroxy-2-butanone 4-phosphate. This is the penultimate step in the biosynthesis of riboflavin.</text>
</comment>
<comment type="catalytic activity">
    <reaction evidence="1">
        <text>(2S)-2-hydroxy-3-oxobutyl phosphate + 5-amino-6-(D-ribitylamino)uracil = 6,7-dimethyl-8-(1-D-ribityl)lumazine + phosphate + 2 H2O + H(+)</text>
        <dbReference type="Rhea" id="RHEA:26152"/>
        <dbReference type="ChEBI" id="CHEBI:15377"/>
        <dbReference type="ChEBI" id="CHEBI:15378"/>
        <dbReference type="ChEBI" id="CHEBI:15934"/>
        <dbReference type="ChEBI" id="CHEBI:43474"/>
        <dbReference type="ChEBI" id="CHEBI:58201"/>
        <dbReference type="ChEBI" id="CHEBI:58830"/>
        <dbReference type="EC" id="2.5.1.78"/>
    </reaction>
</comment>
<comment type="pathway">
    <text evidence="1">Cofactor biosynthesis; riboflavin biosynthesis; riboflavin from 2-hydroxy-3-oxobutyl phosphate and 5-amino-6-(D-ribitylamino)uracil: step 1/2.</text>
</comment>
<comment type="similarity">
    <text evidence="1">Belongs to the DMRL synthase family.</text>
</comment>
<organism>
    <name type="scientific">Clostridium novyi (strain NT)</name>
    <dbReference type="NCBI Taxonomy" id="386415"/>
    <lineage>
        <taxon>Bacteria</taxon>
        <taxon>Bacillati</taxon>
        <taxon>Bacillota</taxon>
        <taxon>Clostridia</taxon>
        <taxon>Eubacteriales</taxon>
        <taxon>Clostridiaceae</taxon>
        <taxon>Clostridium</taxon>
    </lineage>
</organism>
<name>RISB_CLONN</name>
<gene>
    <name evidence="1" type="primary">ribH</name>
    <name type="ordered locus">NT01CX_0712</name>
</gene>
<feature type="chain" id="PRO_1000040405" description="6,7-dimethyl-8-ribityllumazine synthase">
    <location>
        <begin position="1"/>
        <end position="153"/>
    </location>
</feature>
<feature type="active site" description="Proton donor" evidence="1">
    <location>
        <position position="88"/>
    </location>
</feature>
<feature type="binding site" evidence="1">
    <location>
        <position position="22"/>
    </location>
    <ligand>
        <name>5-amino-6-(D-ribitylamino)uracil</name>
        <dbReference type="ChEBI" id="CHEBI:15934"/>
    </ligand>
</feature>
<feature type="binding site" evidence="1">
    <location>
        <begin position="56"/>
        <end position="58"/>
    </location>
    <ligand>
        <name>5-amino-6-(D-ribitylamino)uracil</name>
        <dbReference type="ChEBI" id="CHEBI:15934"/>
    </ligand>
</feature>
<feature type="binding site" evidence="1">
    <location>
        <begin position="80"/>
        <end position="82"/>
    </location>
    <ligand>
        <name>5-amino-6-(D-ribitylamino)uracil</name>
        <dbReference type="ChEBI" id="CHEBI:15934"/>
    </ligand>
</feature>
<feature type="binding site" evidence="1">
    <location>
        <begin position="85"/>
        <end position="86"/>
    </location>
    <ligand>
        <name>(2S)-2-hydroxy-3-oxobutyl phosphate</name>
        <dbReference type="ChEBI" id="CHEBI:58830"/>
    </ligand>
</feature>
<feature type="binding site" evidence="1">
    <location>
        <position position="113"/>
    </location>
    <ligand>
        <name>5-amino-6-(D-ribitylamino)uracil</name>
        <dbReference type="ChEBI" id="CHEBI:15934"/>
    </ligand>
</feature>
<feature type="binding site" evidence="1">
    <location>
        <position position="127"/>
    </location>
    <ligand>
        <name>(2S)-2-hydroxy-3-oxobutyl phosphate</name>
        <dbReference type="ChEBI" id="CHEBI:58830"/>
    </ligand>
</feature>
<reference key="1">
    <citation type="journal article" date="2006" name="Nat. Biotechnol.">
        <title>The genome and transcriptomes of the anti-tumor agent Clostridium novyi-NT.</title>
        <authorList>
            <person name="Bettegowda C."/>
            <person name="Huang X."/>
            <person name="Lin J."/>
            <person name="Cheong I."/>
            <person name="Kohli M."/>
            <person name="Szabo S.A."/>
            <person name="Zhang X."/>
            <person name="Diaz L.A. Jr."/>
            <person name="Velculescu V.E."/>
            <person name="Parmigiani G."/>
            <person name="Kinzler K.W."/>
            <person name="Vogelstein B."/>
            <person name="Zhou S."/>
        </authorList>
    </citation>
    <scope>NUCLEOTIDE SEQUENCE [LARGE SCALE GENOMIC DNA]</scope>
    <source>
        <strain>NT</strain>
    </source>
</reference>
<sequence>MRVYEGNLISEGKKYGIVVGRFNEFIGSKLLSGALDALKRHGVKEDEIEISWVPGAFEIPLVAKKMAKTKKYDSVICLGAVIKGSTAHFDYVSSEVSKGIANVSLDTEVPVIFGVLTTDNIEQAIERAGTKAGNKGYEAAVTAIEMANLLSEI</sequence>